<proteinExistence type="evidence at protein level"/>
<evidence type="ECO:0000255" key="1"/>
<evidence type="ECO:0000256" key="2">
    <source>
        <dbReference type="SAM" id="MobiDB-lite"/>
    </source>
</evidence>
<evidence type="ECO:0000269" key="3">
    <source>
    </source>
</evidence>
<evidence type="ECO:0000269" key="4">
    <source ref="2"/>
</evidence>
<evidence type="ECO:0000305" key="5"/>
<protein>
    <recommendedName>
        <fullName>FMRFamide-related peptides type HF-1</fullName>
    </recommendedName>
    <alternativeName>
        <fullName>TetraFaRP</fullName>
    </alternativeName>
    <component>
        <recommendedName>
            <fullName>QFYRF-amide</fullName>
        </recommendedName>
    </component>
    <component>
        <recommendedName>
            <fullName>FLRF-amide</fullName>
        </recommendedName>
    </component>
    <component>
        <recommendedName>
            <fullName>FMRF-amide</fullName>
        </recommendedName>
    </component>
</protein>
<organism>
    <name type="scientific">Cornu aspersum</name>
    <name type="common">Brown garden snail</name>
    <name type="synonym">Helix aspersa</name>
    <dbReference type="NCBI Taxonomy" id="6535"/>
    <lineage>
        <taxon>Eukaryota</taxon>
        <taxon>Metazoa</taxon>
        <taxon>Spiralia</taxon>
        <taxon>Lophotrochozoa</taxon>
        <taxon>Mollusca</taxon>
        <taxon>Gastropoda</taxon>
        <taxon>Heterobranchia</taxon>
        <taxon>Euthyneura</taxon>
        <taxon>Panpulmonata</taxon>
        <taxon>Eupulmonata</taxon>
        <taxon>Stylommatophora</taxon>
        <taxon>Helicina</taxon>
        <taxon>Helicoidea</taxon>
        <taxon>Helicidae</taxon>
        <taxon>Cornu</taxon>
        <taxon>Cornu</taxon>
    </lineage>
</organism>
<dbReference type="EMBL" id="L20768">
    <property type="protein sequence ID" value="AAA57461.1"/>
    <property type="molecule type" value="mRNA"/>
</dbReference>
<dbReference type="PIR" id="S77971">
    <property type="entry name" value="S77971"/>
</dbReference>
<dbReference type="SMR" id="P41870"/>
<dbReference type="GO" id="GO:0005576">
    <property type="term" value="C:extracellular region"/>
    <property type="evidence" value="ECO:0007669"/>
    <property type="project" value="UniProtKB-SubCell"/>
</dbReference>
<dbReference type="GO" id="GO:0007218">
    <property type="term" value="P:neuropeptide signaling pathway"/>
    <property type="evidence" value="ECO:0007669"/>
    <property type="project" value="UniProtKB-KW"/>
</dbReference>
<dbReference type="InterPro" id="IPR002544">
    <property type="entry name" value="FMRFamid-related_peptide-like"/>
</dbReference>
<dbReference type="InterPro" id="IPR051041">
    <property type="entry name" value="FMRFamide-related_np"/>
</dbReference>
<dbReference type="PANTHER" id="PTHR20986">
    <property type="entry name" value="FMRFAMIDE-RELATED PEPTIDES"/>
    <property type="match status" value="1"/>
</dbReference>
<dbReference type="PANTHER" id="PTHR20986:SF22">
    <property type="entry name" value="FMRFAMIDE-RELATED PEPTIDES"/>
    <property type="match status" value="1"/>
</dbReference>
<dbReference type="Pfam" id="PF01581">
    <property type="entry name" value="FARP"/>
    <property type="match status" value="15"/>
</dbReference>
<accession>P41870</accession>
<feature type="signal peptide" evidence="1">
    <location>
        <begin position="1"/>
        <end position="19"/>
    </location>
</feature>
<feature type="propeptide" id="PRO_0000009582">
    <location>
        <begin position="20"/>
        <end position="45"/>
    </location>
</feature>
<feature type="peptide" id="PRO_0000009583" description="QFYRF-amide">
    <location>
        <begin position="47"/>
        <end position="51"/>
    </location>
</feature>
<feature type="propeptide" id="PRO_0000009584">
    <location>
        <begin position="54"/>
        <end position="94"/>
    </location>
</feature>
<feature type="peptide" id="PRO_0000009585" description="QFYRF-amide">
    <location>
        <begin position="96"/>
        <end position="100"/>
    </location>
</feature>
<feature type="propeptide" id="PRO_0000009586">
    <location>
        <begin position="103"/>
        <end position="109"/>
    </location>
</feature>
<feature type="peptide" id="PRO_0000009587" description="FLRF-amide">
    <location>
        <begin position="112"/>
        <end position="115"/>
    </location>
</feature>
<feature type="propeptide" id="PRO_0000009588">
    <location>
        <begin position="118"/>
        <end position="203"/>
    </location>
</feature>
<feature type="peptide" id="PRO_0000009589" description="FMRF-amide">
    <location>
        <begin position="206"/>
        <end position="209"/>
    </location>
</feature>
<feature type="peptide" id="PRO_0000009590" description="FMRF-amide">
    <location>
        <begin position="213"/>
        <end position="216"/>
    </location>
</feature>
<feature type="propeptide" id="PRO_0000009591">
    <location>
        <begin position="219"/>
        <end position="226"/>
    </location>
</feature>
<feature type="peptide" id="PRO_0000009592" description="FMRF-amide">
    <location>
        <begin position="229"/>
        <end position="232"/>
    </location>
</feature>
<feature type="propeptide" id="PRO_0000009593">
    <location>
        <begin position="235"/>
        <end position="243"/>
    </location>
</feature>
<feature type="peptide" id="PRO_0000009594" description="FMRF-amide">
    <location>
        <begin position="246"/>
        <end position="249"/>
    </location>
</feature>
<feature type="peptide" id="PRO_0000009595" description="FMRF-amide">
    <location>
        <begin position="253"/>
        <end position="256"/>
    </location>
</feature>
<feature type="propeptide" id="PRO_0000009596">
    <location>
        <begin position="259"/>
        <end position="267"/>
    </location>
</feature>
<feature type="peptide" id="PRO_0000009597" description="FLRF-amide">
    <location>
        <begin position="270"/>
        <end position="273"/>
    </location>
</feature>
<feature type="propeptide" id="PRO_0000009598">
    <location>
        <begin position="276"/>
        <end position="283"/>
    </location>
</feature>
<feature type="peptide" id="PRO_0000009599" description="FMRF-amide">
    <location>
        <begin position="287"/>
        <end position="290"/>
    </location>
</feature>
<feature type="propeptide" id="PRO_0000009600">
    <location>
        <begin position="293"/>
        <end position="301"/>
    </location>
</feature>
<feature type="peptide" id="PRO_0000009601" description="FMRF-amide">
    <location>
        <begin position="304"/>
        <end position="307"/>
    </location>
</feature>
<feature type="peptide" id="PRO_0000009602" description="FMRF-amide">
    <location>
        <begin position="311"/>
        <end position="314"/>
    </location>
</feature>
<feature type="propeptide" id="PRO_0000009603">
    <location>
        <begin position="317"/>
        <end position="325"/>
    </location>
</feature>
<feature type="peptide" id="PRO_0000009604" description="FMRF-amide">
    <location>
        <begin position="328"/>
        <end position="331"/>
    </location>
</feature>
<feature type="peptide" id="PRO_0000009605" description="FMRF-amide">
    <location>
        <begin position="335"/>
        <end position="338"/>
    </location>
</feature>
<feature type="propeptide" id="PRO_0000009606">
    <location>
        <begin position="341"/>
        <end position="346"/>
    </location>
</feature>
<feature type="region of interest" description="Disordered" evidence="2">
    <location>
        <begin position="137"/>
        <end position="185"/>
    </location>
</feature>
<feature type="compositionally biased region" description="Basic and acidic residues" evidence="2">
    <location>
        <begin position="141"/>
        <end position="152"/>
    </location>
</feature>
<feature type="compositionally biased region" description="Polar residues" evidence="2">
    <location>
        <begin position="160"/>
        <end position="172"/>
    </location>
</feature>
<feature type="compositionally biased region" description="Basic and acidic residues" evidence="2">
    <location>
        <begin position="173"/>
        <end position="185"/>
    </location>
</feature>
<feature type="modified residue" description="Phenylalanine amide" evidence="4">
    <location>
        <position position="51"/>
    </location>
</feature>
<feature type="modified residue" description="Phenylalanine amide" evidence="4">
    <location>
        <position position="100"/>
    </location>
</feature>
<feature type="modified residue" description="Phenylalanine amide" evidence="3">
    <location>
        <position position="115"/>
    </location>
</feature>
<feature type="modified residue" description="Phenylalanine amide" evidence="3">
    <location>
        <position position="209"/>
    </location>
</feature>
<feature type="modified residue" description="Phenylalanine amide" evidence="3">
    <location>
        <position position="216"/>
    </location>
</feature>
<feature type="modified residue" description="Phenylalanine amide" evidence="3">
    <location>
        <position position="232"/>
    </location>
</feature>
<feature type="modified residue" description="Phenylalanine amide" evidence="3">
    <location>
        <position position="249"/>
    </location>
</feature>
<feature type="modified residue" description="Phenylalanine amide" evidence="3">
    <location>
        <position position="256"/>
    </location>
</feature>
<feature type="modified residue" description="Phenylalanine amide" evidence="3">
    <location>
        <position position="273"/>
    </location>
</feature>
<feature type="modified residue" description="Phenylalanine amide" evidence="3">
    <location>
        <position position="290"/>
    </location>
</feature>
<feature type="modified residue" description="Phenylalanine amide" evidence="3">
    <location>
        <position position="307"/>
    </location>
</feature>
<feature type="modified residue" description="Phenylalanine amide" evidence="3">
    <location>
        <position position="314"/>
    </location>
</feature>
<feature type="modified residue" description="Phenylalanine amide" evidence="3">
    <location>
        <position position="331"/>
    </location>
</feature>
<feature type="modified residue" description="Phenylalanine amide" evidence="3">
    <location>
        <position position="338"/>
    </location>
</feature>
<reference key="1">
    <citation type="journal article" date="1992" name="Mol. Cell. Neurosci.">
        <title>Structure of cDNA clones and genomic DNA FMRFamide-related peptides (FaRPs) in Helix.</title>
        <authorList>
            <person name="Lutz E.M."/>
            <person name="Macdonald M."/>
            <person name="Hettle S."/>
            <person name="Price D.A."/>
            <person name="Cottrell G.A."/>
            <person name="Sommerville J."/>
        </authorList>
    </citation>
    <scope>NUCLEOTIDE SEQUENCE [MRNA]</scope>
    <scope>AMIDATION AT PHE-115; PHE-209; PHE-216; PHE-232; PHE-249; PHE-256; PHE-273; PHE-290; PHE-307; PHE-314; PHE-331 AND PHE-338</scope>
    <source>
        <tissue>Ganglion</tissue>
    </source>
</reference>
<reference key="2">
    <citation type="journal article" date="1993" name="Abstr. - Soc. Neurosci.">
        <title>Isolation of pQFYRFamide from snail ganglia.</title>
        <authorList>
            <person name="Price D.A."/>
            <person name="Doble K.E."/>
            <person name="Lesser W."/>
            <person name="Greenberg M.J."/>
            <person name="Cottrell G.A."/>
            <person name="Swiderek K.M."/>
            <person name="Lee T.D."/>
            <person name="Lutz E.M."/>
            <person name="Sommerville J."/>
        </authorList>
    </citation>
    <scope>NUCLEOTIDE SEQUENCE [MRNA]</scope>
    <scope>AMIDATION AT PHE-51 AND PHE-100</scope>
</reference>
<reference key="3">
    <citation type="journal article" date="1990" name="J. Exp. Biol.">
        <title>Seven FMRFamide-related and two SCP-related cardioactive peptides from Helix.</title>
        <authorList>
            <person name="Price D.A."/>
            <person name="Lesser W."/>
            <person name="Lee T.D."/>
            <person name="Doble K.E."/>
            <person name="Greenberg M.J."/>
        </authorList>
    </citation>
    <scope>PARTIAL PROTEIN SEQUENCE (FLRF-AMIDE AND FMRF-AMIDE)</scope>
    <source>
        <tissue>Ganglion</tissue>
    </source>
</reference>
<sequence>MTSLCLTIAPAVLSLICLSSYGWAEDNNGIHTLDDGDNDPFFRHNRQFYRFGRAFVPLWDNADDSLVRKNLLTHWSEFPLSPALSSSDVFSRNSRQFYRFGRSYPPYQDKRFLRFGRSHQPDIDEYLQALNSDQALYRKRRSEDGDSKEDGLNRVARSADANQQSKNTQSNKFGKDLQKRETKKEKLNANDDLEILSNEDDLEKKFMRFGKRFMRFGRGDEDESYDKRFMRFGKSLRHDQEFEKRFMRFGKRFMRFGRGDEDDAREEKRFLRFGKSSNEDEDIKKRFMRFGKSGNEDGDVDKRFMRFGKRFMRFGKSEKEDGDVDKRFMRFGKRFMRFGRGDSETS</sequence>
<comment type="function">
    <text>Can function as both cardioregulatory hormones and transmitters and may regulate cardiovascular function.</text>
</comment>
<comment type="subcellular location">
    <subcellularLocation>
        <location>Secreted</location>
    </subcellularLocation>
</comment>
<comment type="tissue specificity">
    <text>Central nervous system.</text>
</comment>
<comment type="similarity">
    <text evidence="5">Belongs to the FARP (FMRFamide related peptide) family.</text>
</comment>
<keyword id="KW-0027">Amidation</keyword>
<keyword id="KW-0165">Cleavage on pair of basic residues</keyword>
<keyword id="KW-0903">Direct protein sequencing</keyword>
<keyword id="KW-0527">Neuropeptide</keyword>
<keyword id="KW-0677">Repeat</keyword>
<keyword id="KW-0964">Secreted</keyword>
<keyword id="KW-0732">Signal</keyword>
<name>FAR2_CORAP</name>